<accession>B8CNC1</accession>
<protein>
    <recommendedName>
        <fullName evidence="1">Large ribosomal subunit protein uL11</fullName>
    </recommendedName>
    <alternativeName>
        <fullName evidence="2">50S ribosomal protein L11</fullName>
    </alternativeName>
</protein>
<gene>
    <name evidence="1" type="primary">rplK</name>
    <name type="ordered locus">swp_1998</name>
</gene>
<feature type="chain" id="PRO_1000195714" description="Large ribosomal subunit protein uL11">
    <location>
        <begin position="1"/>
        <end position="142"/>
    </location>
</feature>
<dbReference type="EMBL" id="CP000472">
    <property type="protein sequence ID" value="ACJ28755.1"/>
    <property type="molecule type" value="Genomic_DNA"/>
</dbReference>
<dbReference type="RefSeq" id="WP_020912128.1">
    <property type="nucleotide sequence ID" value="NC_011566.1"/>
</dbReference>
<dbReference type="SMR" id="B8CNC1"/>
<dbReference type="STRING" id="225849.swp_1998"/>
<dbReference type="KEGG" id="swp:swp_1998"/>
<dbReference type="eggNOG" id="COG0080">
    <property type="taxonomic scope" value="Bacteria"/>
</dbReference>
<dbReference type="HOGENOM" id="CLU_074237_2_0_6"/>
<dbReference type="OrthoDB" id="9802408at2"/>
<dbReference type="Proteomes" id="UP000000753">
    <property type="component" value="Chromosome"/>
</dbReference>
<dbReference type="GO" id="GO:0022625">
    <property type="term" value="C:cytosolic large ribosomal subunit"/>
    <property type="evidence" value="ECO:0007669"/>
    <property type="project" value="TreeGrafter"/>
</dbReference>
<dbReference type="GO" id="GO:0070180">
    <property type="term" value="F:large ribosomal subunit rRNA binding"/>
    <property type="evidence" value="ECO:0007669"/>
    <property type="project" value="UniProtKB-UniRule"/>
</dbReference>
<dbReference type="GO" id="GO:0003735">
    <property type="term" value="F:structural constituent of ribosome"/>
    <property type="evidence" value="ECO:0007669"/>
    <property type="project" value="InterPro"/>
</dbReference>
<dbReference type="GO" id="GO:0006412">
    <property type="term" value="P:translation"/>
    <property type="evidence" value="ECO:0007669"/>
    <property type="project" value="UniProtKB-UniRule"/>
</dbReference>
<dbReference type="CDD" id="cd00349">
    <property type="entry name" value="Ribosomal_L11"/>
    <property type="match status" value="1"/>
</dbReference>
<dbReference type="FunFam" id="1.10.10.250:FF:000001">
    <property type="entry name" value="50S ribosomal protein L11"/>
    <property type="match status" value="1"/>
</dbReference>
<dbReference type="FunFam" id="3.30.1550.10:FF:000001">
    <property type="entry name" value="50S ribosomal protein L11"/>
    <property type="match status" value="1"/>
</dbReference>
<dbReference type="Gene3D" id="1.10.10.250">
    <property type="entry name" value="Ribosomal protein L11, C-terminal domain"/>
    <property type="match status" value="1"/>
</dbReference>
<dbReference type="Gene3D" id="3.30.1550.10">
    <property type="entry name" value="Ribosomal protein L11/L12, N-terminal domain"/>
    <property type="match status" value="1"/>
</dbReference>
<dbReference type="HAMAP" id="MF_00736">
    <property type="entry name" value="Ribosomal_uL11"/>
    <property type="match status" value="1"/>
</dbReference>
<dbReference type="InterPro" id="IPR000911">
    <property type="entry name" value="Ribosomal_uL11"/>
</dbReference>
<dbReference type="InterPro" id="IPR006519">
    <property type="entry name" value="Ribosomal_uL11_bac-typ"/>
</dbReference>
<dbReference type="InterPro" id="IPR020783">
    <property type="entry name" value="Ribosomal_uL11_C"/>
</dbReference>
<dbReference type="InterPro" id="IPR036769">
    <property type="entry name" value="Ribosomal_uL11_C_sf"/>
</dbReference>
<dbReference type="InterPro" id="IPR020785">
    <property type="entry name" value="Ribosomal_uL11_CS"/>
</dbReference>
<dbReference type="InterPro" id="IPR020784">
    <property type="entry name" value="Ribosomal_uL11_N"/>
</dbReference>
<dbReference type="InterPro" id="IPR036796">
    <property type="entry name" value="Ribosomal_uL11_N_sf"/>
</dbReference>
<dbReference type="NCBIfam" id="TIGR01632">
    <property type="entry name" value="L11_bact"/>
    <property type="match status" value="1"/>
</dbReference>
<dbReference type="PANTHER" id="PTHR11661">
    <property type="entry name" value="60S RIBOSOMAL PROTEIN L12"/>
    <property type="match status" value="1"/>
</dbReference>
<dbReference type="PANTHER" id="PTHR11661:SF1">
    <property type="entry name" value="LARGE RIBOSOMAL SUBUNIT PROTEIN UL11M"/>
    <property type="match status" value="1"/>
</dbReference>
<dbReference type="Pfam" id="PF00298">
    <property type="entry name" value="Ribosomal_L11"/>
    <property type="match status" value="1"/>
</dbReference>
<dbReference type="Pfam" id="PF03946">
    <property type="entry name" value="Ribosomal_L11_N"/>
    <property type="match status" value="1"/>
</dbReference>
<dbReference type="SMART" id="SM00649">
    <property type="entry name" value="RL11"/>
    <property type="match status" value="1"/>
</dbReference>
<dbReference type="SUPFAM" id="SSF54747">
    <property type="entry name" value="Ribosomal L11/L12e N-terminal domain"/>
    <property type="match status" value="1"/>
</dbReference>
<dbReference type="SUPFAM" id="SSF46906">
    <property type="entry name" value="Ribosomal protein L11, C-terminal domain"/>
    <property type="match status" value="1"/>
</dbReference>
<dbReference type="PROSITE" id="PS00359">
    <property type="entry name" value="RIBOSOMAL_L11"/>
    <property type="match status" value="1"/>
</dbReference>
<keyword id="KW-0488">Methylation</keyword>
<keyword id="KW-0687">Ribonucleoprotein</keyword>
<keyword id="KW-0689">Ribosomal protein</keyword>
<keyword id="KW-0694">RNA-binding</keyword>
<keyword id="KW-0699">rRNA-binding</keyword>
<name>RL11_SHEPW</name>
<proteinExistence type="inferred from homology"/>
<comment type="function">
    <text evidence="1">Forms part of the ribosomal stalk which helps the ribosome interact with GTP-bound translation factors.</text>
</comment>
<comment type="subunit">
    <text evidence="1">Part of the ribosomal stalk of the 50S ribosomal subunit. Interacts with L10 and the large rRNA to form the base of the stalk. L10 forms an elongated spine to which L12 dimers bind in a sequential fashion forming a multimeric L10(L12)X complex.</text>
</comment>
<comment type="PTM">
    <text evidence="1">One or more lysine residues are methylated.</text>
</comment>
<comment type="similarity">
    <text evidence="1">Belongs to the universal ribosomal protein uL11 family.</text>
</comment>
<evidence type="ECO:0000255" key="1">
    <source>
        <dbReference type="HAMAP-Rule" id="MF_00736"/>
    </source>
</evidence>
<evidence type="ECO:0000305" key="2"/>
<reference key="1">
    <citation type="journal article" date="2008" name="PLoS ONE">
        <title>Environmental adaptation: genomic analysis of the piezotolerant and psychrotolerant deep-sea iron reducing bacterium Shewanella piezotolerans WP3.</title>
        <authorList>
            <person name="Wang F."/>
            <person name="Wang J."/>
            <person name="Jian H."/>
            <person name="Zhang B."/>
            <person name="Li S."/>
            <person name="Wang F."/>
            <person name="Zeng X."/>
            <person name="Gao L."/>
            <person name="Bartlett D.H."/>
            <person name="Yu J."/>
            <person name="Hu S."/>
            <person name="Xiao X."/>
        </authorList>
    </citation>
    <scope>NUCLEOTIDE SEQUENCE [LARGE SCALE GENOMIC DNA]</scope>
    <source>
        <strain>WP3 / JCM 13877</strain>
    </source>
</reference>
<organism>
    <name type="scientific">Shewanella piezotolerans (strain WP3 / JCM 13877)</name>
    <dbReference type="NCBI Taxonomy" id="225849"/>
    <lineage>
        <taxon>Bacteria</taxon>
        <taxon>Pseudomonadati</taxon>
        <taxon>Pseudomonadota</taxon>
        <taxon>Gammaproteobacteria</taxon>
        <taxon>Alteromonadales</taxon>
        <taxon>Shewanellaceae</taxon>
        <taxon>Shewanella</taxon>
    </lineage>
</organism>
<sequence>MAKKVDGYIKLQVAAGAANPSPPVGPALGQKGVNIMEFCKAFNARTEKFDKGMPIPVVITVYTDRSFTFETKTPPASFLLLKAAGLKSGSGRPNTDKVGTIKRSAVQEIAETKAADMTGADMDAMMRSIEGTARSMGLVVED</sequence>